<accession>P08393</accession>
<dbReference type="EC" id="2.3.2.27" evidence="18"/>
<dbReference type="EMBL" id="X14112">
    <property type="protein sequence ID" value="CAA32336.1"/>
    <property type="molecule type" value="Genomic_DNA"/>
</dbReference>
<dbReference type="EMBL" id="X14112">
    <property type="protein sequence ID" value="CAA32293.1"/>
    <property type="molecule type" value="Genomic_DNA"/>
</dbReference>
<dbReference type="EMBL" id="X04614">
    <property type="protein sequence ID" value="CAA28285.1"/>
    <property type="molecule type" value="Genomic_DNA"/>
</dbReference>
<dbReference type="PIR" id="A29152">
    <property type="entry name" value="EDBE11"/>
</dbReference>
<dbReference type="PDB" id="4WPH">
    <property type="method" value="X-ray"/>
    <property type="resolution" value="2.92 A"/>
    <property type="chains" value="C/D=617-627"/>
</dbReference>
<dbReference type="PDB" id="4WPI">
    <property type="method" value="X-ray"/>
    <property type="resolution" value="3.40 A"/>
    <property type="chains" value="C/D=617-627"/>
</dbReference>
<dbReference type="PDB" id="5C56">
    <property type="method" value="X-ray"/>
    <property type="resolution" value="2.69 A"/>
    <property type="chains" value="B=613-633"/>
</dbReference>
<dbReference type="PDB" id="6JXU">
    <property type="method" value="NMR"/>
    <property type="chains" value="B=357-368"/>
</dbReference>
<dbReference type="PDB" id="6JXV">
    <property type="method" value="NMR"/>
    <property type="chains" value="B=355-374"/>
</dbReference>
<dbReference type="PDB" id="6JXW">
    <property type="method" value="NMR"/>
    <property type="chains" value="B=355-374"/>
</dbReference>
<dbReference type="PDB" id="6JXX">
    <property type="method" value="NMR"/>
    <property type="chains" value="B=355-374"/>
</dbReference>
<dbReference type="PDBsum" id="4WPH"/>
<dbReference type="PDBsum" id="4WPI"/>
<dbReference type="PDBsum" id="5C56"/>
<dbReference type="PDBsum" id="6JXU"/>
<dbReference type="PDBsum" id="6JXV"/>
<dbReference type="PDBsum" id="6JXW"/>
<dbReference type="PDBsum" id="6JXX"/>
<dbReference type="SMR" id="P08393"/>
<dbReference type="BioGRID" id="971426">
    <property type="interactions" value="167"/>
</dbReference>
<dbReference type="BioGRID" id="971427">
    <property type="interactions" value="25"/>
</dbReference>
<dbReference type="DIP" id="DIP-42446N"/>
<dbReference type="IntAct" id="P08393">
    <property type="interactions" value="21"/>
</dbReference>
<dbReference type="MINT" id="P08393"/>
<dbReference type="iPTMnet" id="P08393"/>
<dbReference type="KEGG" id="vg:2703389"/>
<dbReference type="KEGG" id="vg:2703390"/>
<dbReference type="EvolutionaryTrace" id="P08393"/>
<dbReference type="Proteomes" id="UP000009294">
    <property type="component" value="Segment"/>
</dbReference>
<dbReference type="GO" id="GO:0030430">
    <property type="term" value="C:host cell cytoplasm"/>
    <property type="evidence" value="ECO:0007669"/>
    <property type="project" value="UniProtKB-SubCell"/>
</dbReference>
<dbReference type="GO" id="GO:0042025">
    <property type="term" value="C:host cell nucleus"/>
    <property type="evidence" value="ECO:0000303"/>
    <property type="project" value="UniProtKB"/>
</dbReference>
<dbReference type="GO" id="GO:0019033">
    <property type="term" value="C:viral tegument"/>
    <property type="evidence" value="ECO:0000314"/>
    <property type="project" value="CACAO"/>
</dbReference>
<dbReference type="GO" id="GO:0003677">
    <property type="term" value="F:DNA binding"/>
    <property type="evidence" value="ECO:0007669"/>
    <property type="project" value="UniProtKB-KW"/>
</dbReference>
<dbReference type="GO" id="GO:0061630">
    <property type="term" value="F:ubiquitin protein ligase activity"/>
    <property type="evidence" value="ECO:0000314"/>
    <property type="project" value="UniProt"/>
</dbReference>
<dbReference type="GO" id="GO:0004842">
    <property type="term" value="F:ubiquitin-protein transferase activity"/>
    <property type="evidence" value="ECO:0000314"/>
    <property type="project" value="AgBase"/>
</dbReference>
<dbReference type="GO" id="GO:0008270">
    <property type="term" value="F:zinc ion binding"/>
    <property type="evidence" value="ECO:0007669"/>
    <property type="project" value="UniProtKB-KW"/>
</dbReference>
<dbReference type="GO" id="GO:0045732">
    <property type="term" value="P:positive regulation of protein catabolic process"/>
    <property type="evidence" value="ECO:0000304"/>
    <property type="project" value="AgBase"/>
</dbReference>
<dbReference type="GO" id="GO:0000209">
    <property type="term" value="P:protein polyubiquitination"/>
    <property type="evidence" value="ECO:0000314"/>
    <property type="project" value="AgBase"/>
</dbReference>
<dbReference type="GO" id="GO:0019046">
    <property type="term" value="P:release from viral latency"/>
    <property type="evidence" value="ECO:0000304"/>
    <property type="project" value="AgBase"/>
</dbReference>
<dbReference type="GO" id="GO:0034340">
    <property type="term" value="P:response to type I interferon"/>
    <property type="evidence" value="ECO:0000314"/>
    <property type="project" value="BHF-UCL"/>
</dbReference>
<dbReference type="GO" id="GO:0075342">
    <property type="term" value="P:symbiont-mediated disruption of host cell PML body"/>
    <property type="evidence" value="ECO:0000314"/>
    <property type="project" value="UniProtKB"/>
</dbReference>
<dbReference type="GO" id="GO:0039593">
    <property type="term" value="P:symbiont-mediated perturbation of host exit from mitosis"/>
    <property type="evidence" value="ECO:0007669"/>
    <property type="project" value="UniProtKB-KW"/>
</dbReference>
<dbReference type="GO" id="GO:0039648">
    <property type="term" value="P:symbiont-mediated perturbation of host ubiquitin-like protein modification"/>
    <property type="evidence" value="ECO:0007669"/>
    <property type="project" value="UniProtKB-KW"/>
</dbReference>
<dbReference type="GO" id="GO:0039548">
    <property type="term" value="P:symbiont-mediated suppression of host cytoplasmic pattern recognition receptor signaling pathway via inhibition of IRF3 activity"/>
    <property type="evidence" value="ECO:0000314"/>
    <property type="project" value="UniProtKB"/>
</dbReference>
<dbReference type="GO" id="GO:0039502">
    <property type="term" value="P:symbiont-mediated suppression of host type I interferon-mediated signaling pathway"/>
    <property type="evidence" value="ECO:0000314"/>
    <property type="project" value="UniProt"/>
</dbReference>
<dbReference type="CDD" id="cd23130">
    <property type="entry name" value="RING-HC_EHV1-like"/>
    <property type="match status" value="1"/>
</dbReference>
<dbReference type="FunFam" id="3.30.40.10:FF:000628">
    <property type="entry name" value="Ubiquitin E3 ligase ICP0"/>
    <property type="match status" value="1"/>
</dbReference>
<dbReference type="Gene3D" id="3.30.40.10">
    <property type="entry name" value="Zinc/RING finger domain, C3HC4 (zinc finger)"/>
    <property type="match status" value="1"/>
</dbReference>
<dbReference type="InterPro" id="IPR018957">
    <property type="entry name" value="Znf_C3HC4_RING-type"/>
</dbReference>
<dbReference type="InterPro" id="IPR001841">
    <property type="entry name" value="Znf_RING"/>
</dbReference>
<dbReference type="InterPro" id="IPR013083">
    <property type="entry name" value="Znf_RING/FYVE/PHD"/>
</dbReference>
<dbReference type="InterPro" id="IPR017907">
    <property type="entry name" value="Znf_RING_CS"/>
</dbReference>
<dbReference type="PANTHER" id="PTHR45969:SF69">
    <property type="entry name" value="FINGER DOMAIN PROTEIN, PUTATIVE (AFU_ORTHOLOGUE AFUA_3G12190)-RELATED"/>
    <property type="match status" value="1"/>
</dbReference>
<dbReference type="PANTHER" id="PTHR45969">
    <property type="entry name" value="RING ZINC FINGER PROTEIN-RELATED"/>
    <property type="match status" value="1"/>
</dbReference>
<dbReference type="Pfam" id="PF00097">
    <property type="entry name" value="zf-C3HC4"/>
    <property type="match status" value="1"/>
</dbReference>
<dbReference type="SMART" id="SM00184">
    <property type="entry name" value="RING"/>
    <property type="match status" value="1"/>
</dbReference>
<dbReference type="SUPFAM" id="SSF57850">
    <property type="entry name" value="RING/U-box"/>
    <property type="match status" value="1"/>
</dbReference>
<dbReference type="PROSITE" id="PS00518">
    <property type="entry name" value="ZF_RING_1"/>
    <property type="match status" value="1"/>
</dbReference>
<dbReference type="PROSITE" id="PS50089">
    <property type="entry name" value="ZF_RING_2"/>
    <property type="match status" value="1"/>
</dbReference>
<proteinExistence type="evidence at protein level"/>
<reference key="1">
    <citation type="journal article" date="1988" name="J. Gen. Virol.">
        <title>The complete DNA sequence of the long unique region in the genome of herpes simplex virus type 1.</title>
        <authorList>
            <person name="McGeoch D.J."/>
            <person name="Dalrymple M.A."/>
            <person name="Davison A.J."/>
            <person name="Dolan A."/>
            <person name="Frame M.C."/>
            <person name="McNab D."/>
            <person name="Perry L.J."/>
            <person name="Scott J.E."/>
            <person name="Taylor P."/>
        </authorList>
    </citation>
    <scope>NUCLEOTIDE SEQUENCE [GENOMIC DNA]</scope>
</reference>
<reference key="2">
    <citation type="journal article" date="1986" name="J. Gen. Virol.">
        <title>Characterization of the IE110 gene of herpes simplex virus type 1.</title>
        <authorList>
            <person name="Perry L.J."/>
            <person name="Rixon F.J."/>
            <person name="Everett R.D."/>
            <person name="Frame M.C."/>
            <person name="McGeoch D.J."/>
        </authorList>
    </citation>
    <scope>NUCLEOTIDE SEQUENCE [GENOMIC DNA]</scope>
</reference>
<reference key="3">
    <citation type="journal article" date="1988" name="J. Gen. Virol.">
        <title>The DNA sequences of the long repeat region and adjoining parts of the long unique region in the genome of herpes simplex virus type 1.</title>
        <authorList>
            <person name="Perry L.J."/>
            <person name="McGeoch D.J."/>
        </authorList>
    </citation>
    <scope>NUCLEOTIDE SEQUENCE [GENOMIC DNA]</scope>
</reference>
<reference key="4">
    <citation type="journal article" date="2001" name="J. Biol. Chem.">
        <title>Degradation of nucleosome-associated centromeric histone H3-like protein CENP-A induced by herpes simplex virus type 1 protein ICP0.</title>
        <authorList>
            <person name="Lomonte P."/>
            <person name="Sullivan K.F."/>
            <person name="Everett R.D."/>
        </authorList>
    </citation>
    <scope>INTERACTION WITH HUMAN CENPA</scope>
</reference>
<reference key="5">
    <citation type="journal article" date="2001" name="Proc. Natl. Acad. Sci. U.S.A.">
        <title>The infected cell protein 0 of herpes simplex virus 1 dynamically interacts with proteasomes, binds and activates the cdc34 E2 ubiquitin-conjugating enzyme, and possesses in vitro E3 ubiquitin ligase activity.</title>
        <authorList>
            <person name="Van Sant C."/>
            <person name="Hagglund R."/>
            <person name="Lopez P."/>
            <person name="Roizman B."/>
        </authorList>
    </citation>
    <scope>INTERACTION WITH HUMAN CDC34</scope>
</reference>
<reference key="6">
    <citation type="journal article" date="2003" name="J. Biol. Chem.">
        <title>Protein interaction domains of the ubiquitin-specific protease, USP7/HAUSP.</title>
        <authorList>
            <person name="Holowaty M.N."/>
            <person name="Sheng Y."/>
            <person name="Nguyen T."/>
            <person name="Arrowsmith C."/>
            <person name="Frappier L."/>
        </authorList>
    </citation>
    <scope>INTERACTION WITH HUMAN USP7</scope>
</reference>
<reference key="7">
    <citation type="journal article" date="2004" name="J. Biol. Chem.">
        <title>A RING finger ubiquitin ligase is protected from autocatalyzed ubiquitination and degradation by binding to ubiquitin-specific protease USP7.</title>
        <authorList>
            <person name="Canning M."/>
            <person name="Boutell C."/>
            <person name="Parkinson J."/>
            <person name="Everett R.D."/>
        </authorList>
    </citation>
    <scope>AUTOUBIQUITINATION</scope>
</reference>
<reference key="8">
    <citation type="journal article" date="2005" name="Proc. Natl. Acad. Sci. U.S.A.">
        <title>Components of the REST/CoREST/histone deacetylase repressor complex are disrupted, modified, and translocated in HSV-1-infected cells.</title>
        <authorList>
            <person name="Gu H."/>
            <person name="Liang Y."/>
            <person name="Mandel G."/>
            <person name="Roizman B."/>
        </authorList>
    </citation>
    <scope>FUNCTION</scope>
    <scope>INTERACTION WITH HUMAN RCOR1</scope>
</reference>
<reference key="9">
    <citation type="journal article" date="2005" name="J. Virol.">
        <title>Reciprocal activities between herpes simplex virus type 1 regulatory protein ICP0, a ubiquitin E3 ligase, and ubiquitin-specific protease USP7.</title>
        <authorList>
            <person name="Boutell C."/>
            <person name="Canning M."/>
            <person name="Orr A."/>
            <person name="Everett R.D."/>
        </authorList>
    </citation>
    <scope>FUNCTION</scope>
</reference>
<reference key="10">
    <citation type="journal article" date="2008" name="Virus Res.">
        <title>Identification of a novel higher molecular weight isoform of USP7/HAUSP that interacts with the Herpes simplex virus type-1 immediate early protein ICP0.</title>
        <authorList>
            <person name="Antrobus R."/>
            <person name="Boutell C."/>
        </authorList>
    </citation>
    <scope>INTERACTION WITH HUMAN USP7</scope>
    <scope>DEUBIQUITINATION BY HUMAN USP7</scope>
</reference>
<reference key="11">
    <citation type="journal article" date="2010" name="EMBO J.">
        <title>A viral E3 ligase targets RNF8 and RNF168 to control histone ubiquitination and DNA damage responses.</title>
        <authorList>
            <person name="Lilley C.E."/>
            <person name="Chaurushiya M.S."/>
            <person name="Boutell C."/>
            <person name="Landry S."/>
            <person name="Suh J."/>
            <person name="Panier S."/>
            <person name="Everett R.D."/>
            <person name="Stewart G.S."/>
            <person name="Durocher D."/>
            <person name="Weitzman M.D."/>
        </authorList>
    </citation>
    <scope>FUNCTION</scope>
</reference>
<reference key="12">
    <citation type="journal article" date="2010" name="PLoS ONE">
        <title>Cellular localization of the herpes simplex virus ICP0 protein dictates its ability to block IRF3-mediated innate immune responses.</title>
        <authorList>
            <person name="Paladino P."/>
            <person name="Collins S.E."/>
            <person name="Mossman K.L."/>
        </authorList>
    </citation>
    <scope>FUNCTION</scope>
    <scope>SUBCELLULAR LOCATION</scope>
</reference>
<reference key="13">
    <citation type="journal article" date="2010" name="J. Virol.">
        <title>Comparison of the biological and biochemical activities of several members of the alphaherpesvirus ICP0 family of proteins.</title>
        <authorList>
            <person name="Everett R.D."/>
            <person name="Boutell C."/>
            <person name="McNair C."/>
            <person name="Grant L."/>
            <person name="Orr A."/>
        </authorList>
    </citation>
    <scope>FUNCTION</scope>
</reference>
<reference key="14">
    <citation type="journal article" date="2012" name="Mol. Cell">
        <title>Viral E3 ubiquitin ligase-mediated degradation of a cellular E3: viral mimicry of a cellular phosphorylation mark targets the RNF8 FHA domain.</title>
        <authorList>
            <person name="Chaurushiya M.S."/>
            <person name="Lilley C.E."/>
            <person name="Aslanian A."/>
            <person name="Meisenhelder J."/>
            <person name="Scott D.C."/>
            <person name="Landry S."/>
            <person name="Ticau S."/>
            <person name="Boutell C."/>
            <person name="Yates J.R. III"/>
            <person name="Schulman B.A."/>
            <person name="Hunter T."/>
            <person name="Weitzman M.D."/>
        </authorList>
    </citation>
    <scope>FUNCTION</scope>
    <scope>INTERACTION WITH HUMAN RNF8</scope>
    <scope>PHOSPHORYLATION AT THR-67</scope>
    <scope>MUTAGENESIS OF THR-67</scope>
</reference>
<reference key="15">
    <citation type="journal article" date="2012" name="Proc. Natl. Acad. Sci. U.S.A.">
        <title>Nuclear IFI16 induction of IRF-3 signaling during herpesviral infection and degradation of IFI16 by the viral ICP0 protein.</title>
        <authorList>
            <person name="Orzalli M.H."/>
            <person name="DeLuca N.A."/>
            <person name="Knipe D.M."/>
        </authorList>
    </citation>
    <scope>FUNCTION</scope>
</reference>
<reference key="16">
    <citation type="journal article" date="2013" name="J. Virol.">
        <title>DNA sensing-independent inhibition of herpes simplex virus 1 replication by DAI/ZBP1.</title>
        <authorList>
            <person name="Pham T.H."/>
            <person name="Kwon K.M."/>
            <person name="Kim Y.E."/>
            <person name="Kim K.K."/>
            <person name="Ahn J.H."/>
        </authorList>
    </citation>
    <scope>INTERACTION WITH HOST ZBP1</scope>
</reference>
<reference key="17">
    <citation type="journal article" date="2015" name="J. Virol.">
        <title>Identification of TRIM27 as a novel degradation target of Herpes Simplex Virus 1 ICP0.</title>
        <authorList>
            <person name="Conwell S.E."/>
            <person name="White A.E."/>
            <person name="Harper J.W."/>
            <person name="Knipe D.M."/>
        </authorList>
    </citation>
    <scope>INTERACTION WITH HOST TRIM27</scope>
</reference>
<reference key="18">
    <citation type="journal article" date="2016" name="J. Virol.">
        <title>MORC3, a Component of PML Nuclear Bodies, Has a Role in Restricting Herpes Simplex Virus 1 and Human Cytomegalovirus.</title>
        <authorList>
            <person name="Sloan E."/>
            <person name="Orr A."/>
            <person name="Everett R.D."/>
        </authorList>
    </citation>
    <scope>FUNCTION</scope>
    <scope>SUBCELLULAR LOCATION</scope>
    <scope>INTERACTION WITH HOST MORC3</scope>
</reference>
<reference key="19">
    <citation type="journal article" date="2021" name="Nature">
        <title>Self-guarding of MORC3 enables virulence factor-triggered immunity.</title>
        <authorList>
            <person name="Gaidt M.M."/>
            <person name="Morrow A."/>
            <person name="Fairgrieve M.R."/>
            <person name="Karr J.P."/>
            <person name="Yosef N."/>
            <person name="Vance R.E."/>
        </authorList>
    </citation>
    <scope>FUNCTION</scope>
    <scope>INTERACTION WITH HOST MORC3</scope>
</reference>
<reference evidence="21 22 23 24" key="20">
    <citation type="journal article" date="2020" name="J. Mol. Biol.">
        <title>The Viral SUMO-Targeted Ubiquitin Ligase ICP0 is Phosphorylated and Activated by Host Kinase Chk2.</title>
        <authorList>
            <person name="Hembram D.S.S."/>
            <person name="Negi H."/>
            <person name="Biswas P."/>
            <person name="Tripathi V."/>
            <person name="Bhushan L."/>
            <person name="Shet D."/>
            <person name="Kumar V."/>
            <person name="Das R."/>
        </authorList>
    </citation>
    <scope>STRUCTURE BY NMR OF 355-374</scope>
    <scope>FUNCTION</scope>
    <scope>PHOSPHORYLATION BY HOST CK1 AND CHEK2</scope>
    <scope>CATALYTIC ACTIVITY</scope>
</reference>
<sequence length="775" mass="78457">MEPRPGASTRRPEGRPQREPAPDVWVFPCDRDLPDSSDSEAETEVGGRGDADHHDDDSASEADSTDTELFETGLLGPQGVDGGAVSGGSPPREEDPGSCGGAPPREDGGSDEGDVCAVCTDEIAPHLRCDTFPCMHRFCIPCMKTWMQLRNTCPLCNAKLVYLIVGVTPSGSFSTIPIVNDPQTRMEAEEAVRAGTAVDFIWTGNQRFAPRYLTLGGHTVRALSPTHPEPTTDEDDDDLDDADYVPPAPRRTPRAPPRRGAAAPPVTGGASHAAPQPAAARTAPPSAPIGPHGSSNTNTTTNSSGGGGSRQSRAAAPRGASGPSGGVGVGVGVVEAEAGRPRGRTGPLVNRPAPLANNRDPIVISDSPPASPHRPPAAPMPGSAPRPGPPASAAASGPARPRAAVAPCVRAPPPGPGPRAPAPGAEPAARPADARRVPQSHSSLAQAANQEQSLCRARATVARGSGGPGVEGGHGPSRGAAPSGAAPLPSAASVEQEAAVRPRKRRGSGQENPSPQSTRPPLAPAGAKRAATHPPSDSGPGGRGQGGPGTPLTSSAASASSSSASSSSAPTPAGAASSAAGAASSSASASSGGAVGALGGRQEETSLGPRAASGPRGPRKCARKTRHAETSGAVPAGGLTRYLPISGVSSVVALSPYVNKTITGDCLPILDMETGNIGAYVVLVDQTGNMATRLRAAVPGWSRRTLLPETAGNHVMPPEYPTAPASEWNSLWMTPVGNMLFDQGTLVGALDFRSLRSRHPWSGEQGASTRDEGKQ</sequence>
<organismHost>
    <name type="scientific">Homo sapiens</name>
    <name type="common">Human</name>
    <dbReference type="NCBI Taxonomy" id="9606"/>
</organismHost>
<protein>
    <recommendedName>
        <fullName>E3 ubiquitin-protein ligase ICP0</fullName>
        <ecNumber evidence="18">2.3.2.27</ecNumber>
    </recommendedName>
    <alternativeName>
        <fullName>Alpha-0 protein</fullName>
    </alternativeName>
    <alternativeName>
        <fullName>Immediate-early protein IE110</fullName>
    </alternativeName>
    <alternativeName>
        <fullName evidence="20">RING-type E3 ubiquitin transferase ICP0</fullName>
    </alternativeName>
    <alternativeName>
        <fullName>Trans-acting transcriptional protein ICP0</fullName>
    </alternativeName>
    <alternativeName>
        <fullName>VMW110</fullName>
    </alternativeName>
</protein>
<gene>
    <name type="primary">ICP0</name>
    <name type="synonym">IE110</name>
</gene>
<feature type="chain" id="PRO_0000056352" description="E3 ubiquitin-protein ligase ICP0">
    <location>
        <begin position="1"/>
        <end position="775"/>
    </location>
</feature>
<feature type="zinc finger region" description="RING-type" evidence="1">
    <location>
        <begin position="116"/>
        <end position="157"/>
    </location>
</feature>
<feature type="region of interest" description="Disordered" evidence="2">
    <location>
        <begin position="1"/>
        <end position="112"/>
    </location>
</feature>
<feature type="region of interest" description="Disordered" evidence="2">
    <location>
        <begin position="221"/>
        <end position="636"/>
    </location>
</feature>
<feature type="compositionally biased region" description="Basic and acidic residues" evidence="2">
    <location>
        <begin position="10"/>
        <end position="21"/>
    </location>
</feature>
<feature type="compositionally biased region" description="Basic and acidic residues" evidence="2">
    <location>
        <begin position="45"/>
        <end position="57"/>
    </location>
</feature>
<feature type="compositionally biased region" description="Acidic residues" evidence="2">
    <location>
        <begin position="58"/>
        <end position="69"/>
    </location>
</feature>
<feature type="compositionally biased region" description="Acidic residues" evidence="2">
    <location>
        <begin position="231"/>
        <end position="243"/>
    </location>
</feature>
<feature type="compositionally biased region" description="Low complexity" evidence="2">
    <location>
        <begin position="258"/>
        <end position="284"/>
    </location>
</feature>
<feature type="compositionally biased region" description="Polar residues" evidence="2">
    <location>
        <begin position="293"/>
        <end position="302"/>
    </location>
</feature>
<feature type="compositionally biased region" description="Low complexity" evidence="2">
    <location>
        <begin position="310"/>
        <end position="321"/>
    </location>
</feature>
<feature type="compositionally biased region" description="Gly residues" evidence="2">
    <location>
        <begin position="322"/>
        <end position="331"/>
    </location>
</feature>
<feature type="compositionally biased region" description="Pro residues" evidence="2">
    <location>
        <begin position="369"/>
        <end position="390"/>
    </location>
</feature>
<feature type="compositionally biased region" description="Low complexity" evidence="2">
    <location>
        <begin position="391"/>
        <end position="409"/>
    </location>
</feature>
<feature type="compositionally biased region" description="Pro residues" evidence="2">
    <location>
        <begin position="410"/>
        <end position="421"/>
    </location>
</feature>
<feature type="compositionally biased region" description="Low complexity" evidence="2">
    <location>
        <begin position="422"/>
        <end position="431"/>
    </location>
</feature>
<feature type="compositionally biased region" description="Polar residues" evidence="2">
    <location>
        <begin position="439"/>
        <end position="453"/>
    </location>
</feature>
<feature type="compositionally biased region" description="Gly residues" evidence="2">
    <location>
        <begin position="464"/>
        <end position="476"/>
    </location>
</feature>
<feature type="compositionally biased region" description="Low complexity" evidence="2">
    <location>
        <begin position="477"/>
        <end position="493"/>
    </location>
</feature>
<feature type="compositionally biased region" description="Polar residues" evidence="2">
    <location>
        <begin position="509"/>
        <end position="519"/>
    </location>
</feature>
<feature type="compositionally biased region" description="Gly residues" evidence="2">
    <location>
        <begin position="539"/>
        <end position="549"/>
    </location>
</feature>
<feature type="compositionally biased region" description="Low complexity" evidence="2">
    <location>
        <begin position="550"/>
        <end position="592"/>
    </location>
</feature>
<feature type="compositionally biased region" description="Basic residues" evidence="2">
    <location>
        <begin position="617"/>
        <end position="626"/>
    </location>
</feature>
<feature type="modified residue" description="Phosphothreonine; by host; by CK1" evidence="13 18">
    <location>
        <position position="67"/>
    </location>
</feature>
<feature type="mutagenesis site" description="Abolishes interaction host RNF8." evidence="13">
    <original>T</original>
    <variation>A</variation>
    <location>
        <position position="67"/>
    </location>
</feature>
<feature type="strand" evidence="25">
    <location>
        <begin position="359"/>
        <end position="363"/>
    </location>
</feature>
<keyword id="KW-0002">3D-structure</keyword>
<keyword id="KW-0010">Activator</keyword>
<keyword id="KW-0238">DNA-binding</keyword>
<keyword id="KW-0244">Early protein</keyword>
<keyword id="KW-1035">Host cytoplasm</keyword>
<keyword id="KW-1048">Host nucleus</keyword>
<keyword id="KW-0945">Host-virus interaction</keyword>
<keyword id="KW-1090">Inhibition of host innate immune response by virus</keyword>
<keyword id="KW-1092">Inhibition of host IRF3 by virus</keyword>
<keyword id="KW-1098">Inhibition of host mitotic exit by virus</keyword>
<keyword id="KW-1113">Inhibition of host RLR pathway by virus</keyword>
<keyword id="KW-0479">Metal-binding</keyword>
<keyword id="KW-1121">Modulation of host cell cycle by virus</keyword>
<keyword id="KW-1128">Modulation of host ubiquitin pathway by viral E3 ligase</keyword>
<keyword id="KW-1130">Modulation of host ubiquitin pathway by virus</keyword>
<keyword id="KW-0597">Phosphoprotein</keyword>
<keyword id="KW-1185">Reference proteome</keyword>
<keyword id="KW-0804">Transcription</keyword>
<keyword id="KW-0805">Transcription regulation</keyword>
<keyword id="KW-0808">Transferase</keyword>
<keyword id="KW-0832">Ubl conjugation</keyword>
<keyword id="KW-0833">Ubl conjugation pathway</keyword>
<keyword id="KW-0899">Viral immunoevasion</keyword>
<keyword id="KW-1251">Viral latency</keyword>
<keyword id="KW-1272">Viral reactivation from latency</keyword>
<keyword id="KW-0862">Zinc</keyword>
<keyword id="KW-0863">Zinc-finger</keyword>
<evidence type="ECO:0000255" key="1">
    <source>
        <dbReference type="PROSITE-ProRule" id="PRU00175"/>
    </source>
</evidence>
<evidence type="ECO:0000256" key="2">
    <source>
        <dbReference type="SAM" id="MobiDB-lite"/>
    </source>
</evidence>
<evidence type="ECO:0000269" key="3">
    <source>
    </source>
</evidence>
<evidence type="ECO:0000269" key="4">
    <source>
    </source>
</evidence>
<evidence type="ECO:0000269" key="5">
    <source>
    </source>
</evidence>
<evidence type="ECO:0000269" key="6">
    <source>
    </source>
</evidence>
<evidence type="ECO:0000269" key="7">
    <source>
    </source>
</evidence>
<evidence type="ECO:0000269" key="8">
    <source>
    </source>
</evidence>
<evidence type="ECO:0000269" key="9">
    <source>
    </source>
</evidence>
<evidence type="ECO:0000269" key="10">
    <source>
    </source>
</evidence>
<evidence type="ECO:0000269" key="11">
    <source>
    </source>
</evidence>
<evidence type="ECO:0000269" key="12">
    <source>
    </source>
</evidence>
<evidence type="ECO:0000269" key="13">
    <source>
    </source>
</evidence>
<evidence type="ECO:0000269" key="14">
    <source>
    </source>
</evidence>
<evidence type="ECO:0000269" key="15">
    <source>
    </source>
</evidence>
<evidence type="ECO:0000269" key="16">
    <source>
    </source>
</evidence>
<evidence type="ECO:0000269" key="17">
    <source>
    </source>
</evidence>
<evidence type="ECO:0000269" key="18">
    <source>
    </source>
</evidence>
<evidence type="ECO:0000269" key="19">
    <source>
    </source>
</evidence>
<evidence type="ECO:0000305" key="20"/>
<evidence type="ECO:0007744" key="21">
    <source>
        <dbReference type="PDB" id="6JXU"/>
    </source>
</evidence>
<evidence type="ECO:0007744" key="22">
    <source>
        <dbReference type="PDB" id="6JXV"/>
    </source>
</evidence>
<evidence type="ECO:0007744" key="23">
    <source>
        <dbReference type="PDB" id="6JXW"/>
    </source>
</evidence>
<evidence type="ECO:0007744" key="24">
    <source>
        <dbReference type="PDB" id="6JXX"/>
    </source>
</evidence>
<evidence type="ECO:0007829" key="25">
    <source>
        <dbReference type="PDB" id="6JXU"/>
    </source>
</evidence>
<organism>
    <name type="scientific">Human herpesvirus 1 (strain 17)</name>
    <name type="common">HHV-1</name>
    <name type="synonym">Human herpes simplex virus 1</name>
    <dbReference type="NCBI Taxonomy" id="10299"/>
    <lineage>
        <taxon>Viruses</taxon>
        <taxon>Duplodnaviria</taxon>
        <taxon>Heunggongvirae</taxon>
        <taxon>Peploviricota</taxon>
        <taxon>Herviviricetes</taxon>
        <taxon>Herpesvirales</taxon>
        <taxon>Orthoherpesviridae</taxon>
        <taxon>Alphaherpesvirinae</taxon>
        <taxon>Simplexvirus</taxon>
        <taxon>Simplexvirus humanalpha1</taxon>
        <taxon>Human herpesvirus 1</taxon>
    </lineage>
</organism>
<name>ICP0_HHV11</name>
<comment type="function">
    <text evidence="7 8 10 11 12 13 14 17 19">SUMO-targeted ubiquitin ligase that plays an essential role in nuclear antiviral defense evasion triggered by dsDNA viruses (PubMed:32001251). Acts during the initial stages of lytic infection and the reactivation of latent viral genome. Prevents the antiviral effect of nuclear bodies by degrading host PML, SP100 and MORC3 (PubMed:27440897, PubMed:34759314). Prevents antiviral response to viral DNA induced by IFI16 by degrading it. Additionally, inhibits host IRF3 nuclear signaling to prevent interferon production by the infected cells. Interestingly, the E3 ubiquitin ligase activity associated with the RING finger domain does not seem to be directly required to inhibit the activation of IRF3 but instead plays a critical role in modulating the cellular localization of ICP0. Upon reactivation of latent genome, suppresses the silencing of viral DNA by dissociating either HDAC1 or HDAC2 from the HDAC-RCOR1-REST-KDM1A complex localized at the ND10 structures and causes their dispersal. Two cellular histone ubiquitin ligases RNF8 and RNF168 are also targeted by ICP0 for degradation, leading to a loss of ubiquitinated forms of H2A, a relief of transcriptional repression, and the activation of latent viral genomes. Enhances the localization of host CCND3 to ND10 bodies that serve as precursors of replication compartments to enable efficient viral replication. Like many RING-finger E3 ubiquitin ligases, ICP0 can induce its own ubiquitination, an activity that promotes its instability due to its targeting to the 26S proteasome for degradation. ICP0 restricts this process by recruiting the cellular ubiquitin-specific protease USP7 that cleaves the anchored ubiquitin chains from ICP0, thereby promoting its stabilization.</text>
</comment>
<comment type="catalytic activity">
    <reaction>
        <text>S-ubiquitinyl-[E2 ubiquitin-conjugating enzyme]-L-cysteine + [acceptor protein]-L-lysine = [E2 ubiquitin-conjugating enzyme]-L-cysteine + N(6)-ubiquitinyl-[acceptor protein]-L-lysine.</text>
        <dbReference type="EC" id="2.3.2.27"/>
    </reaction>
</comment>
<comment type="subunit">
    <text evidence="3 4 5 7 9 13 15 16 17 19">Interacts directly with human RCOR1/CoREST protein, leading to the disruption of the human BHC corepressor complex (PubMed:15897453). Interacts with human CENPA, leading to its degradation (PubMed:11053442). Interacts with human USP7; this interaction modulates ICP0 stability (PubMed:14506283, PubMed:18590780). Interacts with human CDC34 (PubMed:11447293). Interacts (when phosphorylated) with human RNF8 (via FHA domain) (PubMed:22405594). Interacts with human TRIM27 (PubMed:25320289). Interacts with human ZBP1 (PubMed:23283962). Interacts with host MORC3; this interaction promotes the degradation of host MORC3 (PubMed:27440897, PubMed:34759314).</text>
</comment>
<comment type="interaction">
    <interactant intactId="EBI-6148881">
        <id>P08393</id>
    </interactant>
    <interactant intactId="EBI-375013">
        <id>P30281</id>
        <label>CCND3</label>
    </interactant>
    <organismsDiffer>true</organismsDiffer>
    <experiments>3</experiments>
</comment>
<comment type="interaction">
    <interactant intactId="EBI-6148881">
        <id>P08393</id>
    </interactant>
    <interactant intactId="EBI-607682">
        <id>O15379</id>
        <label>HDAC3</label>
    </interactant>
    <organismsDiffer>true</organismsDiffer>
    <experiments>3</experiments>
</comment>
<comment type="interaction">
    <interactant intactId="EBI-6148881">
        <id>P08393</id>
    </interactant>
    <interactant intactId="EBI-308629">
        <id>P56524</id>
        <label>HDAC4</label>
    </interactant>
    <organismsDiffer>true</organismsDiffer>
    <experiments>3</experiments>
</comment>
<comment type="interaction">
    <interactant intactId="EBI-6148881">
        <id>P08393</id>
    </interactant>
    <interactant intactId="EBI-715576">
        <id>Q9UQL6</id>
        <label>HDAC5</label>
    </interactant>
    <organismsDiffer>true</organismsDiffer>
    <experiments>3</experiments>
</comment>
<comment type="interaction">
    <interactant intactId="EBI-6148881">
        <id>P08393</id>
    </interactant>
    <interactant intactId="EBI-1048378">
        <id>Q8WUI4</id>
        <label>HDAC7</label>
    </interactant>
    <organismsDiffer>true</organismsDiffer>
    <experiments>3</experiments>
</comment>
<comment type="interaction">
    <interactant intactId="EBI-6148881">
        <id>P08393</id>
    </interactant>
    <interactant intactId="EBI-926563">
        <id>Q9UKL0</id>
        <label>RCOR1</label>
    </interactant>
    <organismsDiffer>true</organismsDiffer>
    <experiments>2</experiments>
</comment>
<comment type="interaction">
    <interactant intactId="EBI-6148881">
        <id>P08393</id>
    </interactant>
    <interactant intactId="EBI-302524">
        <id>Q93008</id>
        <label>USP9X</label>
    </interactant>
    <organismsDiffer>true</organismsDiffer>
    <experiments>3</experiments>
</comment>
<comment type="subcellular location">
    <subcellularLocation>
        <location evidence="12">Host cytoplasm</location>
    </subcellularLocation>
    <subcellularLocation>
        <location evidence="12">Host nucleus</location>
    </subcellularLocation>
</comment>
<comment type="PTM">
    <text evidence="13 18">Phosphorylated at Thr-67, leading to promote interaction with host RNF8 (PubMed:22405594). Phosphorylated by host CHEK2; leading to increased SUMO-targeted ubiquitin ligase activity of ICP0 (PubMed:32001251).</text>
</comment>
<comment type="PTM">
    <text evidence="6 9">Auto-ubiquitinated. Deubiquitinated by host USP7; leading to stabilize it.</text>
</comment>
<comment type="similarity">
    <text evidence="20">Belongs to the simplexviruses ICp0 family.</text>
</comment>